<evidence type="ECO:0000250" key="1"/>
<evidence type="ECO:0000255" key="2"/>
<evidence type="ECO:0000255" key="3">
    <source>
        <dbReference type="PROSITE-ProRule" id="PRU00159"/>
    </source>
</evidence>
<evidence type="ECO:0000255" key="4">
    <source>
        <dbReference type="PROSITE-ProRule" id="PRU00206"/>
    </source>
</evidence>
<evidence type="ECO:0000255" key="5">
    <source>
        <dbReference type="PROSITE-ProRule" id="PRU10027"/>
    </source>
</evidence>
<evidence type="ECO:0000256" key="6">
    <source>
        <dbReference type="SAM" id="MobiDB-lite"/>
    </source>
</evidence>
<reference key="1">
    <citation type="journal article" date="1996" name="Science">
        <title>CRINKLY4: a TNFR-like receptor kinase involved in maize epidermal differentiation.</title>
        <authorList>
            <person name="Becraft P.W."/>
            <person name="Stinard P.S."/>
            <person name="McCarty D.R."/>
        </authorList>
    </citation>
    <scope>NUCLEOTIDE SEQUENCE [MRNA]</scope>
    <source>
        <strain>cv. B73</strain>
    </source>
</reference>
<reference key="2">
    <citation type="journal article" date="2008" name="Arch. Biochem. Biophys.">
        <title>Dimerization properties of the transmembrane domains of Arabidopsis CRINKLY4 receptor-like kinase and homologs.</title>
        <authorList>
            <person name="Stokes K.D."/>
            <person name="Gururaj Rao A."/>
        </authorList>
    </citation>
    <scope>HOMODIMERIZATION</scope>
</reference>
<protein>
    <recommendedName>
        <fullName>Putative receptor protein kinase CRINKLY4</fullName>
        <ecNumber>2.7.11.1</ecNumber>
    </recommendedName>
</protein>
<gene>
    <name type="primary">CR4</name>
</gene>
<comment type="function">
    <text>Putative receptor protein kinase. Could play a role in a differentiation signal. The CRINKLY4 (CR4) mutation affects leaf epidermis differentiation such that cell size and morphology are altered, and surface functions are compromised, allowing graft-like fusions between organs.</text>
</comment>
<comment type="catalytic activity">
    <reaction>
        <text>L-seryl-[protein] + ATP = O-phospho-L-seryl-[protein] + ADP + H(+)</text>
        <dbReference type="Rhea" id="RHEA:17989"/>
        <dbReference type="Rhea" id="RHEA-COMP:9863"/>
        <dbReference type="Rhea" id="RHEA-COMP:11604"/>
        <dbReference type="ChEBI" id="CHEBI:15378"/>
        <dbReference type="ChEBI" id="CHEBI:29999"/>
        <dbReference type="ChEBI" id="CHEBI:30616"/>
        <dbReference type="ChEBI" id="CHEBI:83421"/>
        <dbReference type="ChEBI" id="CHEBI:456216"/>
        <dbReference type="EC" id="2.7.11.1"/>
    </reaction>
</comment>
<comment type="catalytic activity">
    <reaction>
        <text>L-threonyl-[protein] + ATP = O-phospho-L-threonyl-[protein] + ADP + H(+)</text>
        <dbReference type="Rhea" id="RHEA:46608"/>
        <dbReference type="Rhea" id="RHEA-COMP:11060"/>
        <dbReference type="Rhea" id="RHEA-COMP:11605"/>
        <dbReference type="ChEBI" id="CHEBI:15378"/>
        <dbReference type="ChEBI" id="CHEBI:30013"/>
        <dbReference type="ChEBI" id="CHEBI:30616"/>
        <dbReference type="ChEBI" id="CHEBI:61977"/>
        <dbReference type="ChEBI" id="CHEBI:456216"/>
        <dbReference type="EC" id="2.7.11.1"/>
    </reaction>
</comment>
<comment type="subunit">
    <text>Homodimer.</text>
</comment>
<comment type="subcellular location">
    <subcellularLocation>
        <location evidence="1">Cell membrane</location>
        <topology evidence="1">Single-pass type I membrane protein</topology>
    </subcellularLocation>
    <subcellularLocation>
        <location evidence="1">Endosome</location>
        <location evidence="1">Multivesicular body membrane</location>
        <topology evidence="1">Single-pass type I membrane protein</topology>
    </subcellularLocation>
    <text evidence="1">Also localized into protein export bodies.</text>
</comment>
<comment type="similarity">
    <text evidence="3">Belongs to the protein kinase superfamily. Ser/Thr protein kinase family.</text>
</comment>
<accession>O24585</accession>
<keyword id="KW-0067">ATP-binding</keyword>
<keyword id="KW-1003">Cell membrane</keyword>
<keyword id="KW-0217">Developmental protein</keyword>
<keyword id="KW-1015">Disulfide bond</keyword>
<keyword id="KW-0967">Endosome</keyword>
<keyword id="KW-0325">Glycoprotein</keyword>
<keyword id="KW-0418">Kinase</keyword>
<keyword id="KW-0472">Membrane</keyword>
<keyword id="KW-0547">Nucleotide-binding</keyword>
<keyword id="KW-0675">Receptor</keyword>
<keyword id="KW-1185">Reference proteome</keyword>
<keyword id="KW-0677">Repeat</keyword>
<keyword id="KW-0723">Serine/threonine-protein kinase</keyword>
<keyword id="KW-0732">Signal</keyword>
<keyword id="KW-0808">Transferase</keyword>
<keyword id="KW-0812">Transmembrane</keyword>
<keyword id="KW-1133">Transmembrane helix</keyword>
<proteinExistence type="evidence at transcript level"/>
<name>CRI4_MAIZE</name>
<organism>
    <name type="scientific">Zea mays</name>
    <name type="common">Maize</name>
    <dbReference type="NCBI Taxonomy" id="4577"/>
    <lineage>
        <taxon>Eukaryota</taxon>
        <taxon>Viridiplantae</taxon>
        <taxon>Streptophyta</taxon>
        <taxon>Embryophyta</taxon>
        <taxon>Tracheophyta</taxon>
        <taxon>Spermatophyta</taxon>
        <taxon>Magnoliopsida</taxon>
        <taxon>Liliopsida</taxon>
        <taxon>Poales</taxon>
        <taxon>Poaceae</taxon>
        <taxon>PACMAD clade</taxon>
        <taxon>Panicoideae</taxon>
        <taxon>Andropogonodae</taxon>
        <taxon>Andropogoneae</taxon>
        <taxon>Tripsacinae</taxon>
        <taxon>Zea</taxon>
    </lineage>
</organism>
<sequence length="901" mass="97439">MDHVPALVLAGCCFLALLPGWACGLGSMSSIAVSYGEDGPVFCGLNSDGSHLVACFGADASVLYGAPPNIPFLGLTAGDGFVCGLLLDTRQPYCWGSNSYVKSGVPQPMVEGARYSELSAGDNHLCALRAAQDGGRGSSAATSLIDCWGYNMTATHAVDEAVSTVSAGSVFNCGLFARNRTVFCWGDETVSGVVGLAPRDLHFQSIGAGGYHVCGVLENAQVFCWGRSLEMQQVVPSSAIGDGDVNIVPMDAMSTVVGGRFHACGIRSLDHQVACWGFTLHNSTSPPKGLKMYALVAGDYFTCGVPAETSLMPRCWGNSGPLALPMAVPPGICVPTACSHGYYEYVNHGEVGSIKVCKPANSRLCLPCSTGCPEGLYESSPCNATADRVCQFDCLKCVTDECLSFCLSQKRTKSRKLMAFQMRIFVAEIVFAVVLVLSVSVTTCLYVRHKLRHCQCSNRELRLAKSTAYSFRKDNMKIQPDMEDLKIRRAQEFSYEELEQATGGFSEDSQVGKGSFSCVFKGILRDGTVVAVKRAIKASDVKKSSKEFHNELDLLSRLNHAHLLNLLGYCEDGSERLLVYEFMAHGSLYQHLHGKDPNLKKRLNWARRVTIAVQAARGIEYLHGYACPPVIHRDIKSSNILIDEDHNARVADFGLSILGPADSGTPLSELPAGTLGYLDPEYYRLHYLTTKSDVYSFGVVLLEILSGRKAIDMQFEEGNIVEWAVPLIKAGDIFAILDPVLSPPSDLEALKKIASVACKCVRMRGKDRPSMDKVTTALEHALALLMGSPCIEQPILPTEVVLGSSRMHKVSQMSSNHSCSENELADGEDQGIGYRAPSWITFPSVTSSQRRKSSASEADIVGRRATDGRNVGSSIGDGLRSLEEEIAPASPQENLYLQHNF</sequence>
<dbReference type="EC" id="2.7.11.1"/>
<dbReference type="EMBL" id="U67422">
    <property type="protein sequence ID" value="AAB09771.1"/>
    <property type="molecule type" value="mRNA"/>
</dbReference>
<dbReference type="PIR" id="T04108">
    <property type="entry name" value="T04108"/>
</dbReference>
<dbReference type="RefSeq" id="NP_001335655.1">
    <property type="nucleotide sequence ID" value="NM_001348726.1"/>
</dbReference>
<dbReference type="SMR" id="O24585"/>
<dbReference type="FunCoup" id="O24585">
    <property type="interactions" value="3079"/>
</dbReference>
<dbReference type="STRING" id="4577.O24585"/>
<dbReference type="GlyCosmos" id="O24585">
    <property type="glycosylation" value="4 sites, No reported glycans"/>
</dbReference>
<dbReference type="PaxDb" id="4577-GRMZM2G051637_P01"/>
<dbReference type="EnsemblPlants" id="Zm00001eb406780_T001">
    <property type="protein sequence ID" value="Zm00001eb406780_P001"/>
    <property type="gene ID" value="Zm00001eb406780"/>
</dbReference>
<dbReference type="EnsemblPlants" id="Zm00001eb406780_T002">
    <property type="protein sequence ID" value="Zm00001eb406780_P002"/>
    <property type="gene ID" value="Zm00001eb406780"/>
</dbReference>
<dbReference type="GeneID" id="542346"/>
<dbReference type="Gramene" id="Zm00001eb406780_T001">
    <property type="protein sequence ID" value="Zm00001eb406780_P001"/>
    <property type="gene ID" value="Zm00001eb406780"/>
</dbReference>
<dbReference type="Gramene" id="Zm00001eb406780_T002">
    <property type="protein sequence ID" value="Zm00001eb406780_P002"/>
    <property type="gene ID" value="Zm00001eb406780"/>
</dbReference>
<dbReference type="KEGG" id="zma:542346"/>
<dbReference type="MaizeGDB" id="128723"/>
<dbReference type="eggNOG" id="ENOG502QUN0">
    <property type="taxonomic scope" value="Eukaryota"/>
</dbReference>
<dbReference type="HOGENOM" id="CLU_009948_0_0_1"/>
<dbReference type="InParanoid" id="O24585"/>
<dbReference type="OMA" id="TPAHFPF"/>
<dbReference type="OrthoDB" id="1895016at2759"/>
<dbReference type="Proteomes" id="UP000007305">
    <property type="component" value="Chromosome 10"/>
</dbReference>
<dbReference type="ExpressionAtlas" id="O24585">
    <property type="expression patterns" value="baseline and differential"/>
</dbReference>
<dbReference type="GO" id="GO:0009986">
    <property type="term" value="C:cell surface"/>
    <property type="evidence" value="ECO:0007669"/>
    <property type="project" value="EnsemblPlants"/>
</dbReference>
<dbReference type="GO" id="GO:0030139">
    <property type="term" value="C:endocytic vesicle"/>
    <property type="evidence" value="ECO:0007669"/>
    <property type="project" value="EnsemblPlants"/>
</dbReference>
<dbReference type="GO" id="GO:0032585">
    <property type="term" value="C:multivesicular body membrane"/>
    <property type="evidence" value="ECO:0007669"/>
    <property type="project" value="UniProtKB-SubCell"/>
</dbReference>
<dbReference type="GO" id="GO:0005886">
    <property type="term" value="C:plasma membrane"/>
    <property type="evidence" value="ECO:0007669"/>
    <property type="project" value="UniProtKB-SubCell"/>
</dbReference>
<dbReference type="GO" id="GO:0005524">
    <property type="term" value="F:ATP binding"/>
    <property type="evidence" value="ECO:0007669"/>
    <property type="project" value="UniProtKB-KW"/>
</dbReference>
<dbReference type="GO" id="GO:0042803">
    <property type="term" value="F:protein homodimerization activity"/>
    <property type="evidence" value="ECO:0000314"/>
    <property type="project" value="UniProtKB"/>
</dbReference>
<dbReference type="GO" id="GO:0106310">
    <property type="term" value="F:protein serine kinase activity"/>
    <property type="evidence" value="ECO:0007669"/>
    <property type="project" value="RHEA"/>
</dbReference>
<dbReference type="GO" id="GO:0004674">
    <property type="term" value="F:protein serine/threonine kinase activity"/>
    <property type="evidence" value="ECO:0007669"/>
    <property type="project" value="UniProtKB-KW"/>
</dbReference>
<dbReference type="GO" id="GO:0009793">
    <property type="term" value="P:embryo development ending in seed dormancy"/>
    <property type="evidence" value="ECO:0007669"/>
    <property type="project" value="EnsemblPlants"/>
</dbReference>
<dbReference type="GO" id="GO:0048439">
    <property type="term" value="P:flower morphogenesis"/>
    <property type="evidence" value="ECO:0007669"/>
    <property type="project" value="EnsemblPlants"/>
</dbReference>
<dbReference type="GO" id="GO:0010311">
    <property type="term" value="P:lateral root formation"/>
    <property type="evidence" value="ECO:0007669"/>
    <property type="project" value="EnsemblPlants"/>
</dbReference>
<dbReference type="GO" id="GO:0032877">
    <property type="term" value="P:positive regulation of DNA endoreduplication"/>
    <property type="evidence" value="ECO:0007669"/>
    <property type="project" value="EnsemblPlants"/>
</dbReference>
<dbReference type="GO" id="GO:0009786">
    <property type="term" value="P:regulation of asymmetric cell division"/>
    <property type="evidence" value="ECO:0007669"/>
    <property type="project" value="EnsemblPlants"/>
</dbReference>
<dbReference type="GO" id="GO:0048829">
    <property type="term" value="P:root cap development"/>
    <property type="evidence" value="ECO:0007669"/>
    <property type="project" value="EnsemblPlants"/>
</dbReference>
<dbReference type="GO" id="GO:0090392">
    <property type="term" value="P:sepal giant cell differentiation"/>
    <property type="evidence" value="ECO:0007669"/>
    <property type="project" value="EnsemblPlants"/>
</dbReference>
<dbReference type="FunFam" id="2.130.10.30:FF:000066">
    <property type="entry name" value="Putative receptor protein kinase CRINKLY4"/>
    <property type="match status" value="1"/>
</dbReference>
<dbReference type="FunFam" id="1.10.510.10:FF:000477">
    <property type="entry name" value="Receptor protein kinase CRINKLY4"/>
    <property type="match status" value="1"/>
</dbReference>
<dbReference type="FunFam" id="3.30.200.20:FF:000357">
    <property type="entry name" value="serine/threonine-protein kinase-like protein CCR1"/>
    <property type="match status" value="1"/>
</dbReference>
<dbReference type="Gene3D" id="3.30.200.20">
    <property type="entry name" value="Phosphorylase Kinase, domain 1"/>
    <property type="match status" value="1"/>
</dbReference>
<dbReference type="Gene3D" id="2.130.10.30">
    <property type="entry name" value="Regulator of chromosome condensation 1/beta-lactamase-inhibitor protein II"/>
    <property type="match status" value="1"/>
</dbReference>
<dbReference type="Gene3D" id="1.10.510.10">
    <property type="entry name" value="Transferase(Phosphotransferase) domain 1"/>
    <property type="match status" value="1"/>
</dbReference>
<dbReference type="InterPro" id="IPR011009">
    <property type="entry name" value="Kinase-like_dom_sf"/>
</dbReference>
<dbReference type="InterPro" id="IPR000719">
    <property type="entry name" value="Prot_kinase_dom"/>
</dbReference>
<dbReference type="InterPro" id="IPR017441">
    <property type="entry name" value="Protein_kinase_ATP_BS"/>
</dbReference>
<dbReference type="InterPro" id="IPR009091">
    <property type="entry name" value="RCC1/BLIP-II"/>
</dbReference>
<dbReference type="InterPro" id="IPR001245">
    <property type="entry name" value="Ser-Thr/Tyr_kinase_cat_dom"/>
</dbReference>
<dbReference type="InterPro" id="IPR008271">
    <property type="entry name" value="Ser/Thr_kinase_AS"/>
</dbReference>
<dbReference type="InterPro" id="IPR001368">
    <property type="entry name" value="TNFR/NGFR_Cys_rich_reg"/>
</dbReference>
<dbReference type="PANTHER" id="PTHR47460">
    <property type="entry name" value="SERINE/THREONINE-PROTEIN KINASE-LIKE PROTEIN ACR4"/>
    <property type="match status" value="1"/>
</dbReference>
<dbReference type="PANTHER" id="PTHR47460:SF1">
    <property type="entry name" value="SERINE_THREONINE-PROTEIN KINASE-LIKE PROTEIN ACR4"/>
    <property type="match status" value="1"/>
</dbReference>
<dbReference type="Pfam" id="PF07714">
    <property type="entry name" value="PK_Tyr_Ser-Thr"/>
    <property type="match status" value="1"/>
</dbReference>
<dbReference type="Pfam" id="PF13540">
    <property type="entry name" value="RCC1_2"/>
    <property type="match status" value="1"/>
</dbReference>
<dbReference type="Pfam" id="PF00020">
    <property type="entry name" value="TNFR_c6"/>
    <property type="match status" value="1"/>
</dbReference>
<dbReference type="SMART" id="SM00220">
    <property type="entry name" value="S_TKc"/>
    <property type="match status" value="1"/>
</dbReference>
<dbReference type="SMART" id="SM00208">
    <property type="entry name" value="TNFR"/>
    <property type="match status" value="1"/>
</dbReference>
<dbReference type="SUPFAM" id="SSF56112">
    <property type="entry name" value="Protein kinase-like (PK-like)"/>
    <property type="match status" value="1"/>
</dbReference>
<dbReference type="SUPFAM" id="SSF50985">
    <property type="entry name" value="RCC1/BLIP-II"/>
    <property type="match status" value="1"/>
</dbReference>
<dbReference type="PROSITE" id="PS00107">
    <property type="entry name" value="PROTEIN_KINASE_ATP"/>
    <property type="match status" value="1"/>
</dbReference>
<dbReference type="PROSITE" id="PS50011">
    <property type="entry name" value="PROTEIN_KINASE_DOM"/>
    <property type="match status" value="1"/>
</dbReference>
<dbReference type="PROSITE" id="PS00108">
    <property type="entry name" value="PROTEIN_KINASE_ST"/>
    <property type="match status" value="1"/>
</dbReference>
<dbReference type="PROSITE" id="PS50050">
    <property type="entry name" value="TNFR_NGFR_2"/>
    <property type="match status" value="1"/>
</dbReference>
<feature type="signal peptide" evidence="2">
    <location>
        <begin position="1"/>
        <end position="24"/>
    </location>
</feature>
<feature type="chain" id="PRO_0000024320" description="Putative receptor protein kinase CRINKLY4">
    <location>
        <begin position="25"/>
        <end position="901"/>
    </location>
</feature>
<feature type="topological domain" description="Extracellular" evidence="2">
    <location>
        <begin position="25"/>
        <end position="423"/>
    </location>
</feature>
<feature type="transmembrane region" description="Helical" evidence="2">
    <location>
        <begin position="424"/>
        <end position="444"/>
    </location>
</feature>
<feature type="topological domain" description="Cytoplasmic" evidence="2">
    <location>
        <begin position="445"/>
        <end position="901"/>
    </location>
</feature>
<feature type="repeat" description="1">
    <location>
        <begin position="33"/>
        <end position="68"/>
    </location>
</feature>
<feature type="repeat" description="2">
    <location>
        <begin position="72"/>
        <end position="107"/>
    </location>
</feature>
<feature type="repeat" description="3">
    <location>
        <begin position="125"/>
        <end position="160"/>
    </location>
</feature>
<feature type="repeat" description="4">
    <location>
        <begin position="162"/>
        <end position="195"/>
    </location>
</feature>
<feature type="repeat" description="5">
    <location>
        <begin position="203"/>
        <end position="236"/>
    </location>
</feature>
<feature type="repeat" description="6">
    <location>
        <begin position="253"/>
        <end position="287"/>
    </location>
</feature>
<feature type="repeat" description="7">
    <location>
        <begin position="292"/>
        <end position="330"/>
    </location>
</feature>
<feature type="repeat" description="TNFR-Cys">
    <location>
        <begin position="357"/>
        <end position="391"/>
    </location>
</feature>
<feature type="domain" description="Protein kinase" evidence="3">
    <location>
        <begin position="505"/>
        <end position="712"/>
    </location>
</feature>
<feature type="region of interest" description="7 X 36 AA repeats">
    <location>
        <begin position="33"/>
        <end position="330"/>
    </location>
</feature>
<feature type="region of interest" description="Disordered" evidence="6">
    <location>
        <begin position="845"/>
        <end position="876"/>
    </location>
</feature>
<feature type="active site" description="Proton acceptor" evidence="3 5">
    <location>
        <position position="634"/>
    </location>
</feature>
<feature type="binding site" evidence="3">
    <location>
        <begin position="511"/>
        <end position="519"/>
    </location>
    <ligand>
        <name>ATP</name>
        <dbReference type="ChEBI" id="CHEBI:30616"/>
    </ligand>
</feature>
<feature type="binding site" evidence="3">
    <location>
        <position position="533"/>
    </location>
    <ligand>
        <name>ATP</name>
        <dbReference type="ChEBI" id="CHEBI:30616"/>
    </ligand>
</feature>
<feature type="glycosylation site" description="N-linked (GlcNAc...) asparagine" evidence="2">
    <location>
        <position position="151"/>
    </location>
</feature>
<feature type="glycosylation site" description="N-linked (GlcNAc...) asparagine" evidence="2">
    <location>
        <position position="179"/>
    </location>
</feature>
<feature type="glycosylation site" description="N-linked (GlcNAc...) asparagine" evidence="2">
    <location>
        <position position="282"/>
    </location>
</feature>
<feature type="glycosylation site" description="N-linked (GlcNAc...) asparagine" evidence="2">
    <location>
        <position position="383"/>
    </location>
</feature>
<feature type="disulfide bond" evidence="4">
    <location>
        <begin position="338"/>
        <end position="365"/>
    </location>
</feature>
<feature type="disulfide bond" evidence="4">
    <location>
        <begin position="368"/>
        <end position="382"/>
    </location>
</feature>
<feature type="disulfide bond" evidence="4">
    <location>
        <begin position="372"/>
        <end position="390"/>
    </location>
</feature>